<proteinExistence type="inferred from homology"/>
<protein>
    <recommendedName>
        <fullName evidence="1">Fatty acid oxidation complex subunit alpha</fullName>
    </recommendedName>
    <domain>
        <recommendedName>
            <fullName evidence="1">Enoyl-CoA hydratase/3-hydroxybutyryl-CoA epimerase</fullName>
            <ecNumber evidence="1">4.2.1.17</ecNumber>
            <ecNumber evidence="1">5.1.2.3</ecNumber>
        </recommendedName>
    </domain>
    <domain>
        <recommendedName>
            <fullName evidence="1">3-hydroxyacyl-CoA dehydrogenase</fullName>
            <ecNumber evidence="1">1.1.1.35</ecNumber>
        </recommendedName>
    </domain>
</protein>
<evidence type="ECO:0000255" key="1">
    <source>
        <dbReference type="HAMAP-Rule" id="MF_01617"/>
    </source>
</evidence>
<reference key="1">
    <citation type="journal article" date="2007" name="J. Bacteriol.">
        <title>The genome sequence of avian pathogenic Escherichia coli strain O1:K1:H7 shares strong similarities with human extraintestinal pathogenic E. coli genomes.</title>
        <authorList>
            <person name="Johnson T.J."/>
            <person name="Kariyawasam S."/>
            <person name="Wannemuehler Y."/>
            <person name="Mangiamele P."/>
            <person name="Johnson S.J."/>
            <person name="Doetkott C."/>
            <person name="Skyberg J.A."/>
            <person name="Lynne A.M."/>
            <person name="Johnson J.R."/>
            <person name="Nolan L.K."/>
        </authorList>
    </citation>
    <scope>NUCLEOTIDE SEQUENCE [LARGE SCALE GENOMIC DNA]</scope>
</reference>
<dbReference type="EC" id="4.2.1.17" evidence="1"/>
<dbReference type="EC" id="5.1.2.3" evidence="1"/>
<dbReference type="EC" id="1.1.1.35" evidence="1"/>
<dbReference type="EMBL" id="CP000468">
    <property type="protein sequence ID" value="ABJ01728.1"/>
    <property type="molecule type" value="Genomic_DNA"/>
</dbReference>
<dbReference type="RefSeq" id="WP_000425008.1">
    <property type="nucleotide sequence ID" value="NZ_CADILS010000099.1"/>
</dbReference>
<dbReference type="SMR" id="A1ADI8"/>
<dbReference type="KEGG" id="ecv:APECO1_4225"/>
<dbReference type="HOGENOM" id="CLU_009834_16_1_6"/>
<dbReference type="UniPathway" id="UPA00659"/>
<dbReference type="Proteomes" id="UP000008216">
    <property type="component" value="Chromosome"/>
</dbReference>
<dbReference type="GO" id="GO:0005737">
    <property type="term" value="C:cytoplasm"/>
    <property type="evidence" value="ECO:0007669"/>
    <property type="project" value="UniProtKB-SubCell"/>
</dbReference>
<dbReference type="GO" id="GO:0008692">
    <property type="term" value="F:3-hydroxybutyryl-CoA epimerase activity"/>
    <property type="evidence" value="ECO:0007669"/>
    <property type="project" value="UniProtKB-UniRule"/>
</dbReference>
<dbReference type="GO" id="GO:0004300">
    <property type="term" value="F:enoyl-CoA hydratase activity"/>
    <property type="evidence" value="ECO:0007669"/>
    <property type="project" value="UniProtKB-UniRule"/>
</dbReference>
<dbReference type="GO" id="GO:0016509">
    <property type="term" value="F:long-chain-3-hydroxyacyl-CoA dehydrogenase activity"/>
    <property type="evidence" value="ECO:0007669"/>
    <property type="project" value="TreeGrafter"/>
</dbReference>
<dbReference type="GO" id="GO:0070403">
    <property type="term" value="F:NAD+ binding"/>
    <property type="evidence" value="ECO:0007669"/>
    <property type="project" value="InterPro"/>
</dbReference>
<dbReference type="GO" id="GO:0006635">
    <property type="term" value="P:fatty acid beta-oxidation"/>
    <property type="evidence" value="ECO:0007669"/>
    <property type="project" value="UniProtKB-UniRule"/>
</dbReference>
<dbReference type="CDD" id="cd06558">
    <property type="entry name" value="crotonase-like"/>
    <property type="match status" value="1"/>
</dbReference>
<dbReference type="FunFam" id="1.10.1040.50:FF:000003">
    <property type="entry name" value="Fatty acid oxidation complex subunit alpha"/>
    <property type="match status" value="1"/>
</dbReference>
<dbReference type="FunFam" id="3.90.226.10:FF:000011">
    <property type="entry name" value="Fatty acid oxidation complex subunit alpha"/>
    <property type="match status" value="1"/>
</dbReference>
<dbReference type="FunFam" id="3.40.50.720:FF:000009">
    <property type="entry name" value="Fatty oxidation complex, alpha subunit"/>
    <property type="match status" value="1"/>
</dbReference>
<dbReference type="Gene3D" id="1.10.1040.50">
    <property type="match status" value="1"/>
</dbReference>
<dbReference type="Gene3D" id="3.90.226.10">
    <property type="entry name" value="2-enoyl-CoA Hydratase, Chain A, domain 1"/>
    <property type="match status" value="1"/>
</dbReference>
<dbReference type="Gene3D" id="3.40.50.720">
    <property type="entry name" value="NAD(P)-binding Rossmann-like Domain"/>
    <property type="match status" value="1"/>
</dbReference>
<dbReference type="HAMAP" id="MF_01617">
    <property type="entry name" value="FadJ"/>
    <property type="match status" value="1"/>
</dbReference>
<dbReference type="InterPro" id="IPR006180">
    <property type="entry name" value="3-OHacyl-CoA_DH_CS"/>
</dbReference>
<dbReference type="InterPro" id="IPR006176">
    <property type="entry name" value="3-OHacyl-CoA_DH_NAD-bd"/>
</dbReference>
<dbReference type="InterPro" id="IPR006108">
    <property type="entry name" value="3HC_DH_C"/>
</dbReference>
<dbReference type="InterPro" id="IPR008927">
    <property type="entry name" value="6-PGluconate_DH-like_C_sf"/>
</dbReference>
<dbReference type="InterPro" id="IPR029045">
    <property type="entry name" value="ClpP/crotonase-like_dom_sf"/>
</dbReference>
<dbReference type="InterPro" id="IPR001753">
    <property type="entry name" value="Enoyl-CoA_hydra/iso"/>
</dbReference>
<dbReference type="InterPro" id="IPR050136">
    <property type="entry name" value="FA_oxidation_alpha_subunit"/>
</dbReference>
<dbReference type="InterPro" id="IPR012802">
    <property type="entry name" value="FadJ"/>
</dbReference>
<dbReference type="InterPro" id="IPR036291">
    <property type="entry name" value="NAD(P)-bd_dom_sf"/>
</dbReference>
<dbReference type="NCBIfam" id="TIGR02440">
    <property type="entry name" value="FadJ"/>
    <property type="match status" value="1"/>
</dbReference>
<dbReference type="NCBIfam" id="NF008363">
    <property type="entry name" value="PRK11154.1"/>
    <property type="match status" value="1"/>
</dbReference>
<dbReference type="PANTHER" id="PTHR43612">
    <property type="entry name" value="TRIFUNCTIONAL ENZYME SUBUNIT ALPHA"/>
    <property type="match status" value="1"/>
</dbReference>
<dbReference type="PANTHER" id="PTHR43612:SF3">
    <property type="entry name" value="TRIFUNCTIONAL ENZYME SUBUNIT ALPHA, MITOCHONDRIAL"/>
    <property type="match status" value="1"/>
</dbReference>
<dbReference type="Pfam" id="PF00725">
    <property type="entry name" value="3HCDH"/>
    <property type="match status" value="2"/>
</dbReference>
<dbReference type="Pfam" id="PF02737">
    <property type="entry name" value="3HCDH_N"/>
    <property type="match status" value="1"/>
</dbReference>
<dbReference type="Pfam" id="PF00378">
    <property type="entry name" value="ECH_1"/>
    <property type="match status" value="1"/>
</dbReference>
<dbReference type="SUPFAM" id="SSF48179">
    <property type="entry name" value="6-phosphogluconate dehydrogenase C-terminal domain-like"/>
    <property type="match status" value="2"/>
</dbReference>
<dbReference type="SUPFAM" id="SSF52096">
    <property type="entry name" value="ClpP/crotonase"/>
    <property type="match status" value="1"/>
</dbReference>
<dbReference type="SUPFAM" id="SSF51735">
    <property type="entry name" value="NAD(P)-binding Rossmann-fold domains"/>
    <property type="match status" value="1"/>
</dbReference>
<dbReference type="PROSITE" id="PS00067">
    <property type="entry name" value="3HCDH"/>
    <property type="match status" value="1"/>
</dbReference>
<feature type="chain" id="PRO_1000069485" description="Fatty acid oxidation complex subunit alpha">
    <location>
        <begin position="1"/>
        <end position="714"/>
    </location>
</feature>
<feature type="region of interest" description="Enoyl-CoA hydratase" evidence="1">
    <location>
        <begin position="1"/>
        <end position="190"/>
    </location>
</feature>
<feature type="region of interest" description="3-hydroxyacyl-CoA dehydrogenase" evidence="1">
    <location>
        <begin position="306"/>
        <end position="714"/>
    </location>
</feature>
<feature type="site" description="Important for catalytic activity" evidence="1">
    <location>
        <position position="118"/>
    </location>
</feature>
<feature type="site" description="Important for catalytic activity" evidence="1">
    <location>
        <position position="140"/>
    </location>
</feature>
<sequence>MEMASAFTLNVRLDNIAIITIDVPGEKMNTLKAEFASQVRAIIKQIRENKELRGVVFVSAKPDNFIAGADINMIGNCKTAQEAEVLARQGQQLMAEIHALPIPVIAAIHGACLGGGLELALACHGRVCTDDPKTVLGLPEVQLGLLPGSGGTQRLPRLIGVSTALEMILTGKQLRAKQAVKLGLVDDVVPHSILLEAAVELAKQDRPSSRPLPVRERILAGPLGRALLFKMVGKKTEHKTQGNYPATERILEVVETGLAQGTSSGYDAEARAFGELAMTPQSQALRNIFFASTDVKKDPGSDAPPAPLNSVGILGGGLMGGGIAYVTACKAGLPVRIKDINPRGINHALKYSWDQLEGKVRRRHLKASERDKQLALISGTTDYCGFAHRDLIIEAVFENLELKQQMVAEVEQNCATHTIFASNTSSLPIGDIAAHAARPEQVIGLHFFSPVEKMPLVEIIPHASTSAQTIATTVKLAKKQGKTPIVVRDKAGFYVNRILAPYINEAIRMLTEGERIEHIDAALVKFGFPVGPIQLLDEVGIDTGTKIMPVLEAAYGERFSAPANVVSSILNDDRKGRKNGRGFYLYGQKGRKSKKQVDPAIYPLIGAQGQGRLSAPQVAERCVMLMLNEAVRCLDEQVIRSVRDGDIGAVFGIGFPPFLGGPFRYIDSLGAGEVVAIMQRLATQYGSRFTPCDRLVEMSERGESFWKTTATDLQ</sequence>
<organism>
    <name type="scientific">Escherichia coli O1:K1 / APEC</name>
    <dbReference type="NCBI Taxonomy" id="405955"/>
    <lineage>
        <taxon>Bacteria</taxon>
        <taxon>Pseudomonadati</taxon>
        <taxon>Pseudomonadota</taxon>
        <taxon>Gammaproteobacteria</taxon>
        <taxon>Enterobacterales</taxon>
        <taxon>Enterobacteriaceae</taxon>
        <taxon>Escherichia</taxon>
    </lineage>
</organism>
<accession>A1ADI8</accession>
<gene>
    <name evidence="1" type="primary">fadJ</name>
    <name type="ordered locus">Ecok1_22340</name>
    <name type="ORF">APECO1_4225</name>
</gene>
<keyword id="KW-0963">Cytoplasm</keyword>
<keyword id="KW-0276">Fatty acid metabolism</keyword>
<keyword id="KW-0413">Isomerase</keyword>
<keyword id="KW-0442">Lipid degradation</keyword>
<keyword id="KW-0443">Lipid metabolism</keyword>
<keyword id="KW-0456">Lyase</keyword>
<keyword id="KW-0511">Multifunctional enzyme</keyword>
<keyword id="KW-0520">NAD</keyword>
<keyword id="KW-0560">Oxidoreductase</keyword>
<keyword id="KW-1185">Reference proteome</keyword>
<comment type="function">
    <text evidence="1">Catalyzes the formation of a hydroxyacyl-CoA by addition of water on enoyl-CoA. Also exhibits 3-hydroxyacyl-CoA epimerase and 3-hydroxyacyl-CoA dehydrogenase activities.</text>
</comment>
<comment type="catalytic activity">
    <reaction evidence="1">
        <text>a (3S)-3-hydroxyacyl-CoA = a (2E)-enoyl-CoA + H2O</text>
        <dbReference type="Rhea" id="RHEA:16105"/>
        <dbReference type="ChEBI" id="CHEBI:15377"/>
        <dbReference type="ChEBI" id="CHEBI:57318"/>
        <dbReference type="ChEBI" id="CHEBI:58856"/>
        <dbReference type="EC" id="4.2.1.17"/>
    </reaction>
</comment>
<comment type="catalytic activity">
    <reaction evidence="1">
        <text>a 4-saturated-(3S)-3-hydroxyacyl-CoA = a (3E)-enoyl-CoA + H2O</text>
        <dbReference type="Rhea" id="RHEA:20724"/>
        <dbReference type="ChEBI" id="CHEBI:15377"/>
        <dbReference type="ChEBI" id="CHEBI:58521"/>
        <dbReference type="ChEBI" id="CHEBI:137480"/>
        <dbReference type="EC" id="4.2.1.17"/>
    </reaction>
</comment>
<comment type="catalytic activity">
    <reaction evidence="1">
        <text>a (3S)-3-hydroxyacyl-CoA + NAD(+) = a 3-oxoacyl-CoA + NADH + H(+)</text>
        <dbReference type="Rhea" id="RHEA:22432"/>
        <dbReference type="ChEBI" id="CHEBI:15378"/>
        <dbReference type="ChEBI" id="CHEBI:57318"/>
        <dbReference type="ChEBI" id="CHEBI:57540"/>
        <dbReference type="ChEBI" id="CHEBI:57945"/>
        <dbReference type="ChEBI" id="CHEBI:90726"/>
        <dbReference type="EC" id="1.1.1.35"/>
    </reaction>
</comment>
<comment type="catalytic activity">
    <reaction evidence="1">
        <text>(3S)-3-hydroxybutanoyl-CoA = (3R)-3-hydroxybutanoyl-CoA</text>
        <dbReference type="Rhea" id="RHEA:21760"/>
        <dbReference type="ChEBI" id="CHEBI:57315"/>
        <dbReference type="ChEBI" id="CHEBI:57316"/>
        <dbReference type="EC" id="5.1.2.3"/>
    </reaction>
</comment>
<comment type="pathway">
    <text evidence="1">Lipid metabolism; fatty acid beta-oxidation.</text>
</comment>
<comment type="subunit">
    <text evidence="1">Heterotetramer of two alpha chains (FadJ) and two beta chains (FadI).</text>
</comment>
<comment type="subcellular location">
    <subcellularLocation>
        <location evidence="1">Cytoplasm</location>
    </subcellularLocation>
</comment>
<comment type="similarity">
    <text evidence="1">In the N-terminal section; belongs to the enoyl-CoA hydratase/isomerase family.</text>
</comment>
<comment type="similarity">
    <text evidence="1">In the central section; belongs to the 3-hydroxyacyl-CoA dehydrogenase family.</text>
</comment>
<name>FADJ_ECOK1</name>